<sequence>MTQSNPNEQNVELNRTSLYWGLLLIFVLAVLFSNYFFN</sequence>
<name>PSBL_IPOAL</name>
<protein>
    <recommendedName>
        <fullName evidence="1">Photosystem II reaction center protein L</fullName>
        <shortName evidence="1">PSII-L</shortName>
    </recommendedName>
</protein>
<gene>
    <name evidence="1" type="primary">psbL</name>
</gene>
<accession>Q7H8J7</accession>
<comment type="function">
    <text evidence="1">One of the components of the core complex of photosystem II (PSII). PSII is a light-driven water:plastoquinone oxidoreductase that uses light energy to abstract electrons from H(2)O, generating O(2) and a proton gradient subsequently used for ATP formation. It consists of a core antenna complex that captures photons, and an electron transfer chain that converts photonic excitation into a charge separation. This subunit is found at the monomer-monomer interface and is required for correct PSII assembly and/or dimerization.</text>
</comment>
<comment type="subunit">
    <text evidence="1">PSII is composed of 1 copy each of membrane proteins PsbA, PsbB, PsbC, PsbD, PsbE, PsbF, PsbH, PsbI, PsbJ, PsbK, PsbL, PsbM, PsbT, PsbX, PsbY, PsbZ, Psb30/Ycf12, at least 3 peripheral proteins of the oxygen-evolving complex and a large number of cofactors. It forms dimeric complexes.</text>
</comment>
<comment type="subcellular location">
    <subcellularLocation>
        <location evidence="1">Plastid</location>
        <location evidence="1">Chloroplast thylakoid membrane</location>
        <topology evidence="1">Single-pass membrane protein</topology>
    </subcellularLocation>
</comment>
<comment type="similarity">
    <text evidence="1">Belongs to the PsbL family.</text>
</comment>
<organism>
    <name type="scientific">Ipomoea alba</name>
    <name type="common">Moonflower</name>
    <dbReference type="NCBI Taxonomy" id="89634"/>
    <lineage>
        <taxon>Eukaryota</taxon>
        <taxon>Viridiplantae</taxon>
        <taxon>Streptophyta</taxon>
        <taxon>Embryophyta</taxon>
        <taxon>Tracheophyta</taxon>
        <taxon>Spermatophyta</taxon>
        <taxon>Magnoliopsida</taxon>
        <taxon>eudicotyledons</taxon>
        <taxon>Gunneridae</taxon>
        <taxon>Pentapetalae</taxon>
        <taxon>asterids</taxon>
        <taxon>lamiids</taxon>
        <taxon>Solanales</taxon>
        <taxon>Convolvulaceae</taxon>
        <taxon>Ipomoeeae</taxon>
        <taxon>Ipomoea</taxon>
    </lineage>
</organism>
<evidence type="ECO:0000255" key="1">
    <source>
        <dbReference type="HAMAP-Rule" id="MF_01317"/>
    </source>
</evidence>
<keyword id="KW-0150">Chloroplast</keyword>
<keyword id="KW-0472">Membrane</keyword>
<keyword id="KW-0602">Photosynthesis</keyword>
<keyword id="KW-0604">Photosystem II</keyword>
<keyword id="KW-0934">Plastid</keyword>
<keyword id="KW-0674">Reaction center</keyword>
<keyword id="KW-0793">Thylakoid</keyword>
<keyword id="KW-0812">Transmembrane</keyword>
<keyword id="KW-1133">Transmembrane helix</keyword>
<reference key="1">
    <citation type="journal article" date="2002" name="Am. J. Bot.">
        <title>Monophyly of the Convolvulaceae and circumscription of their major lineages based on DNA sequences of multiple chloroplast loci.</title>
        <authorList>
            <person name="Stefanovic S."/>
            <person name="Krueger L."/>
            <person name="Olmstead R.G."/>
        </authorList>
        <dbReference type="AGRICOLA" id="IND23320510"/>
    </citation>
    <scope>NUCLEOTIDE SEQUENCE [GENOMIC DNA]</scope>
</reference>
<dbReference type="EMBL" id="AY100861">
    <property type="protein sequence ID" value="AAM55567.1"/>
    <property type="molecule type" value="Genomic_DNA"/>
</dbReference>
<dbReference type="RefSeq" id="YP_010578748.1">
    <property type="nucleotide sequence ID" value="NC_068906.1"/>
</dbReference>
<dbReference type="SMR" id="Q7H8J7"/>
<dbReference type="GeneID" id="76828231"/>
<dbReference type="GO" id="GO:0009535">
    <property type="term" value="C:chloroplast thylakoid membrane"/>
    <property type="evidence" value="ECO:0007669"/>
    <property type="project" value="UniProtKB-SubCell"/>
</dbReference>
<dbReference type="GO" id="GO:0009539">
    <property type="term" value="C:photosystem II reaction center"/>
    <property type="evidence" value="ECO:0007669"/>
    <property type="project" value="InterPro"/>
</dbReference>
<dbReference type="GO" id="GO:0015979">
    <property type="term" value="P:photosynthesis"/>
    <property type="evidence" value="ECO:0007669"/>
    <property type="project" value="UniProtKB-UniRule"/>
</dbReference>
<dbReference type="HAMAP" id="MF_01317">
    <property type="entry name" value="PSII_PsbL"/>
    <property type="match status" value="1"/>
</dbReference>
<dbReference type="InterPro" id="IPR003372">
    <property type="entry name" value="PSII_PsbL"/>
</dbReference>
<dbReference type="InterPro" id="IPR037266">
    <property type="entry name" value="PSII_PsbL_sf"/>
</dbReference>
<dbReference type="NCBIfam" id="NF001972">
    <property type="entry name" value="PRK00753.1"/>
    <property type="match status" value="1"/>
</dbReference>
<dbReference type="Pfam" id="PF02419">
    <property type="entry name" value="PsbL"/>
    <property type="match status" value="1"/>
</dbReference>
<dbReference type="SUPFAM" id="SSF161017">
    <property type="entry name" value="Photosystem II reaction center protein L, PsbL"/>
    <property type="match status" value="1"/>
</dbReference>
<proteinExistence type="inferred from homology"/>
<geneLocation type="chloroplast"/>
<feature type="chain" id="PRO_0000219725" description="Photosystem II reaction center protein L">
    <location>
        <begin position="1"/>
        <end position="38"/>
    </location>
</feature>
<feature type="transmembrane region" description="Helical" evidence="1">
    <location>
        <begin position="17"/>
        <end position="37"/>
    </location>
</feature>